<dbReference type="EC" id="2.3.1.-" evidence="3"/>
<dbReference type="EC" id="2.3.1.53" evidence="3"/>
<dbReference type="EMBL" id="U18997">
    <property type="protein sequence ID" value="AAA58239.1"/>
    <property type="molecule type" value="Genomic_DNA"/>
</dbReference>
<dbReference type="EMBL" id="U00096">
    <property type="protein sequence ID" value="AAC76466.1"/>
    <property type="molecule type" value="Genomic_DNA"/>
</dbReference>
<dbReference type="EMBL" id="AP009048">
    <property type="protein sequence ID" value="BAE77852.1"/>
    <property type="molecule type" value="Genomic_DNA"/>
</dbReference>
<dbReference type="PIR" id="D65140">
    <property type="entry name" value="D65140"/>
</dbReference>
<dbReference type="RefSeq" id="NP_417898.1">
    <property type="nucleotide sequence ID" value="NC_000913.3"/>
</dbReference>
<dbReference type="RefSeq" id="WP_001295206.1">
    <property type="nucleotide sequence ID" value="NZ_SSZK01000008.1"/>
</dbReference>
<dbReference type="SMR" id="P46854"/>
<dbReference type="BioGRID" id="4259623">
    <property type="interactions" value="17"/>
</dbReference>
<dbReference type="FunCoup" id="P46854">
    <property type="interactions" value="230"/>
</dbReference>
<dbReference type="IntAct" id="P46854">
    <property type="interactions" value="4"/>
</dbReference>
<dbReference type="STRING" id="511145.b3441"/>
<dbReference type="jPOST" id="P46854"/>
<dbReference type="PaxDb" id="511145-b3441"/>
<dbReference type="EnsemblBacteria" id="AAC76466">
    <property type="protein sequence ID" value="AAC76466"/>
    <property type="gene ID" value="b3441"/>
</dbReference>
<dbReference type="GeneID" id="75202285"/>
<dbReference type="GeneID" id="947943"/>
<dbReference type="KEGG" id="ecj:JW3405"/>
<dbReference type="KEGG" id="eco:b3441"/>
<dbReference type="KEGG" id="ecoc:C3026_18645"/>
<dbReference type="PATRIC" id="fig|511145.12.peg.3538"/>
<dbReference type="EchoBASE" id="EB2779"/>
<dbReference type="eggNOG" id="COG1247">
    <property type="taxonomic scope" value="Bacteria"/>
</dbReference>
<dbReference type="HOGENOM" id="CLU_013985_19_8_6"/>
<dbReference type="InParanoid" id="P46854"/>
<dbReference type="OMA" id="FGMGVKD"/>
<dbReference type="OrthoDB" id="336415at2"/>
<dbReference type="PhylomeDB" id="P46854"/>
<dbReference type="BioCyc" id="EcoCyc:G7758-MONOMER"/>
<dbReference type="PRO" id="PR:P46854"/>
<dbReference type="Proteomes" id="UP000000625">
    <property type="component" value="Chromosome"/>
</dbReference>
<dbReference type="GO" id="GO:0016747">
    <property type="term" value="F:acyltransferase activity, transferring groups other than amino-acyl groups"/>
    <property type="evidence" value="ECO:0000318"/>
    <property type="project" value="GO_Central"/>
</dbReference>
<dbReference type="GO" id="GO:0103045">
    <property type="term" value="F:L-methionine N-acyltransferase activity"/>
    <property type="evidence" value="ECO:0007669"/>
    <property type="project" value="RHEA"/>
</dbReference>
<dbReference type="GO" id="GO:0050176">
    <property type="term" value="F:L-phenylalanine N-acetyltransferase activity"/>
    <property type="evidence" value="ECO:0007669"/>
    <property type="project" value="UniProtKB-EC"/>
</dbReference>
<dbReference type="GO" id="GO:0008080">
    <property type="term" value="F:N-acetyltransferase activity"/>
    <property type="evidence" value="ECO:0000314"/>
    <property type="project" value="EcoCyc"/>
</dbReference>
<dbReference type="CDD" id="cd04301">
    <property type="entry name" value="NAT_SF"/>
    <property type="match status" value="1"/>
</dbReference>
<dbReference type="FunFam" id="3.40.630.30:FF:000050">
    <property type="entry name" value="Acetyltransferase YhhY"/>
    <property type="match status" value="1"/>
</dbReference>
<dbReference type="Gene3D" id="3.40.630.30">
    <property type="match status" value="1"/>
</dbReference>
<dbReference type="InterPro" id="IPR016181">
    <property type="entry name" value="Acyl_CoA_acyltransferase"/>
</dbReference>
<dbReference type="InterPro" id="IPR000182">
    <property type="entry name" value="GNAT_dom"/>
</dbReference>
<dbReference type="NCBIfam" id="NF007527">
    <property type="entry name" value="PRK10140.1"/>
    <property type="match status" value="1"/>
</dbReference>
<dbReference type="PANTHER" id="PTHR43072">
    <property type="entry name" value="N-ACETYLTRANSFERASE"/>
    <property type="match status" value="1"/>
</dbReference>
<dbReference type="Pfam" id="PF00583">
    <property type="entry name" value="Acetyltransf_1"/>
    <property type="match status" value="1"/>
</dbReference>
<dbReference type="SUPFAM" id="SSF55729">
    <property type="entry name" value="Acyl-CoA N-acyltransferases (Nat)"/>
    <property type="match status" value="1"/>
</dbReference>
<dbReference type="PROSITE" id="PS51186">
    <property type="entry name" value="GNAT"/>
    <property type="match status" value="1"/>
</dbReference>
<feature type="chain" id="PRO_0000074613" description="L-amino acid N-acetyltransferase AaaT">
    <location>
        <begin position="1"/>
        <end position="162"/>
    </location>
</feature>
<feature type="domain" description="N-acetyltransferase" evidence="1">
    <location>
        <begin position="4"/>
        <end position="162"/>
    </location>
</feature>
<gene>
    <name evidence="4" type="primary">aaaT</name>
    <name evidence="7" type="synonym">yhhY</name>
    <name type="ordered locus">b3441</name>
    <name type="ordered locus">JW3405</name>
</gene>
<reference key="1">
    <citation type="journal article" date="1997" name="Science">
        <title>The complete genome sequence of Escherichia coli K-12.</title>
        <authorList>
            <person name="Blattner F.R."/>
            <person name="Plunkett G. III"/>
            <person name="Bloch C.A."/>
            <person name="Perna N.T."/>
            <person name="Burland V."/>
            <person name="Riley M."/>
            <person name="Collado-Vides J."/>
            <person name="Glasner J.D."/>
            <person name="Rode C.K."/>
            <person name="Mayhew G.F."/>
            <person name="Gregor J."/>
            <person name="Davis N.W."/>
            <person name="Kirkpatrick H.A."/>
            <person name="Goeden M.A."/>
            <person name="Rose D.J."/>
            <person name="Mau B."/>
            <person name="Shao Y."/>
        </authorList>
    </citation>
    <scope>NUCLEOTIDE SEQUENCE [LARGE SCALE GENOMIC DNA]</scope>
    <source>
        <strain>K12 / MG1655 / ATCC 47076</strain>
    </source>
</reference>
<reference key="2">
    <citation type="journal article" date="2006" name="Mol. Syst. Biol.">
        <title>Highly accurate genome sequences of Escherichia coli K-12 strains MG1655 and W3110.</title>
        <authorList>
            <person name="Hayashi K."/>
            <person name="Morooka N."/>
            <person name="Yamamoto Y."/>
            <person name="Fujita K."/>
            <person name="Isono K."/>
            <person name="Choi S."/>
            <person name="Ohtsubo E."/>
            <person name="Baba T."/>
            <person name="Wanner B.L."/>
            <person name="Mori H."/>
            <person name="Horiuchi T."/>
        </authorList>
    </citation>
    <scope>NUCLEOTIDE SEQUENCE [LARGE SCALE GENOMIC DNA]</scope>
    <source>
        <strain>K12 / W3110 / ATCC 27325 / DSM 5911</strain>
    </source>
</reference>
<reference key="3">
    <citation type="journal article" date="2014" name="J. Bacteriol.">
        <title>The RimL transacetylase provides resistance to translation inhibitor microcin C.</title>
        <authorList>
            <person name="Kazakov T."/>
            <person name="Kuznedelov K."/>
            <person name="Semenova E."/>
            <person name="Mukhamedyarov D."/>
            <person name="Datsenko K.A."/>
            <person name="Metlitskaya A."/>
            <person name="Vondenhoff G.H."/>
            <person name="Tikhonov A."/>
            <person name="Agarwal V."/>
            <person name="Nair S."/>
            <person name="Van Aerschot A."/>
            <person name="Severinov K."/>
        </authorList>
    </citation>
    <scope>FUNCTION</scope>
</reference>
<reference key="4">
    <citation type="journal article" date="2017" name="Nat. Methods">
        <title>Nontargeted in vitro metabolomics for high-throughput identification of novel enzymes in Escherichia coli.</title>
        <authorList>
            <person name="Sevin D.C."/>
            <person name="Fuhrer T."/>
            <person name="Zamboni N."/>
            <person name="Sauer U."/>
        </authorList>
    </citation>
    <scope>FUNCTION</scope>
    <scope>CATALYTIC ACTIVITY</scope>
    <source>
        <strain>K12</strain>
    </source>
</reference>
<keyword id="KW-0012">Acyltransferase</keyword>
<keyword id="KW-1185">Reference proteome</keyword>
<keyword id="KW-0808">Transferase</keyword>
<name>AAAT_ECOLI</name>
<sequence length="162" mass="18794">MSEIVIRHAETRDYEAIRQIHAQPEVYCNTLQVPHPSDHMWQERLADRPGIKQLVACIDGDVVGHLTIDVQQRPRRSHVADFGICVDSRWKNRGVASALMREMIEMCDNWLRVDRIELTVFVDNAPAIKVYKKYGFEIEGTGKKYALRNGEYVDAYYMARVK</sequence>
<evidence type="ECO:0000255" key="1">
    <source>
        <dbReference type="PROSITE-ProRule" id="PRU00532"/>
    </source>
</evidence>
<evidence type="ECO:0000269" key="2">
    <source>
    </source>
</evidence>
<evidence type="ECO:0000269" key="3">
    <source>
    </source>
</evidence>
<evidence type="ECO:0000303" key="4">
    <source>
    </source>
</evidence>
<evidence type="ECO:0000305" key="5"/>
<evidence type="ECO:0000305" key="6">
    <source>
    </source>
</evidence>
<evidence type="ECO:0000312" key="7">
    <source>
        <dbReference type="EMBL" id="AAC76466.1"/>
    </source>
</evidence>
<comment type="function">
    <text evidence="2 3">Catalyzes the N-acetylation of L-phenylalanine and L-methionine using acetyl-CoA as acetyl donor in vitro. Cannot accept L-tyrosine as substrate and propionyl-CoA, succinyl-CoA or (S)-methylmalonyl-CoA as acyl donors (PubMed:27941785). Is also able to acetylate and thus detoxify several nonhydrolyzable aminoacyl adenylates, but not the processed form of the peptide-nucleotide antibiotic microcin C (McC). When overproduced, provides complete resistance to leucyl sulfamoyl adenylate (LSA) and partial resistance to alanyl sulfamoyl adenylate (ASA) and phenylalanyl sulfamoyl adenylate (FSA). Therefore, may protect bacteria from various toxic aminoacyl nucleotides, either exogenous or those generated inside the cell during normal metabolism (PubMed:25002546).</text>
</comment>
<comment type="catalytic activity">
    <reaction evidence="3">
        <text>L-phenylalanine + acetyl-CoA = N-acetyl-L-phenylalanine + CoA + H(+)</text>
        <dbReference type="Rhea" id="RHEA:17801"/>
        <dbReference type="ChEBI" id="CHEBI:15378"/>
        <dbReference type="ChEBI" id="CHEBI:57287"/>
        <dbReference type="ChEBI" id="CHEBI:57288"/>
        <dbReference type="ChEBI" id="CHEBI:57702"/>
        <dbReference type="ChEBI" id="CHEBI:58095"/>
        <dbReference type="EC" id="2.3.1.53"/>
    </reaction>
</comment>
<comment type="catalytic activity">
    <reaction evidence="3">
        <text>L-methionine + acetyl-CoA = N-acetyl-L-methionine + CoA + H(+)</text>
        <dbReference type="Rhea" id="RHEA:44144"/>
        <dbReference type="ChEBI" id="CHEBI:15378"/>
        <dbReference type="ChEBI" id="CHEBI:57287"/>
        <dbReference type="ChEBI" id="CHEBI:57288"/>
        <dbReference type="ChEBI" id="CHEBI:57844"/>
        <dbReference type="ChEBI" id="CHEBI:71670"/>
    </reaction>
</comment>
<comment type="similarity">
    <text evidence="5">Belongs to the acetyltransferase family.</text>
</comment>
<accession>P46854</accession>
<accession>Q2M7A4</accession>
<protein>
    <recommendedName>
        <fullName evidence="4">L-amino acid N-acetyltransferase AaaT</fullName>
    </recommendedName>
    <alternativeName>
        <fullName evidence="6">L-methionine N-acetyltransferase</fullName>
        <ecNumber evidence="3">2.3.1.-</ecNumber>
    </alternativeName>
    <alternativeName>
        <fullName evidence="6">L-phenylalanine N-acetyltransferase</fullName>
        <ecNumber evidence="3">2.3.1.53</ecNumber>
    </alternativeName>
</protein>
<proteinExistence type="evidence at protein level"/>
<organism>
    <name type="scientific">Escherichia coli (strain K12)</name>
    <dbReference type="NCBI Taxonomy" id="83333"/>
    <lineage>
        <taxon>Bacteria</taxon>
        <taxon>Pseudomonadati</taxon>
        <taxon>Pseudomonadota</taxon>
        <taxon>Gammaproteobacteria</taxon>
        <taxon>Enterobacterales</taxon>
        <taxon>Enterobacteriaceae</taxon>
        <taxon>Escherichia</taxon>
    </lineage>
</organism>